<name>IF2_RHIWR</name>
<comment type="function">
    <text evidence="2">One of the essential components for the initiation of protein synthesis. Protects formylmethionyl-tRNA from spontaneous hydrolysis and promotes its binding to the 30S ribosomal subunits. Also involved in the hydrolysis of GTP during the formation of the 70S ribosomal complex.</text>
</comment>
<comment type="subcellular location">
    <subcellularLocation>
        <location evidence="2">Cytoplasm</location>
    </subcellularLocation>
</comment>
<comment type="similarity">
    <text evidence="2">Belongs to the TRAFAC class translation factor GTPase superfamily. Classic translation factor GTPase family. IF-2 subfamily.</text>
</comment>
<accession>A5VCZ5</accession>
<reference key="1">
    <citation type="journal article" date="2010" name="J. Bacteriol.">
        <title>Genome sequence of the dioxin-mineralizing bacterium Sphingomonas wittichii RW1.</title>
        <authorList>
            <person name="Miller T.R."/>
            <person name="Delcher A.L."/>
            <person name="Salzberg S.L."/>
            <person name="Saunders E."/>
            <person name="Detter J.C."/>
            <person name="Halden R.U."/>
        </authorList>
    </citation>
    <scope>NUCLEOTIDE SEQUENCE [LARGE SCALE GENOMIC DNA]</scope>
    <source>
        <strain>DSM 6014 / CCUG 31198 / JCM 15750 / NBRC 105917 / EY 4224 / RW1</strain>
    </source>
</reference>
<protein>
    <recommendedName>
        <fullName evidence="2">Translation initiation factor IF-2</fullName>
    </recommendedName>
</protein>
<keyword id="KW-0963">Cytoplasm</keyword>
<keyword id="KW-0342">GTP-binding</keyword>
<keyword id="KW-0396">Initiation factor</keyword>
<keyword id="KW-0547">Nucleotide-binding</keyword>
<keyword id="KW-0648">Protein biosynthesis</keyword>
<keyword id="KW-1185">Reference proteome</keyword>
<organism>
    <name type="scientific">Rhizorhabdus wittichii (strain DSM 6014 / CCUG 31198 / JCM 15750 / NBRC 105917 / EY 4224 / RW1)</name>
    <name type="common">Sphingomonas wittichii</name>
    <dbReference type="NCBI Taxonomy" id="392499"/>
    <lineage>
        <taxon>Bacteria</taxon>
        <taxon>Pseudomonadati</taxon>
        <taxon>Pseudomonadota</taxon>
        <taxon>Alphaproteobacteria</taxon>
        <taxon>Sphingomonadales</taxon>
        <taxon>Sphingomonadaceae</taxon>
        <taxon>Rhizorhabdus</taxon>
    </lineage>
</organism>
<feature type="chain" id="PRO_1000008344" description="Translation initiation factor IF-2">
    <location>
        <begin position="1"/>
        <end position="856"/>
    </location>
</feature>
<feature type="domain" description="tr-type G">
    <location>
        <begin position="356"/>
        <end position="526"/>
    </location>
</feature>
<feature type="region of interest" description="Disordered" evidence="3">
    <location>
        <begin position="1"/>
        <end position="248"/>
    </location>
</feature>
<feature type="region of interest" description="Disordered" evidence="3">
    <location>
        <begin position="254"/>
        <end position="273"/>
    </location>
</feature>
<feature type="region of interest" description="G1" evidence="1">
    <location>
        <begin position="365"/>
        <end position="372"/>
    </location>
</feature>
<feature type="region of interest" description="G2" evidence="1">
    <location>
        <begin position="390"/>
        <end position="394"/>
    </location>
</feature>
<feature type="region of interest" description="G3" evidence="1">
    <location>
        <begin position="412"/>
        <end position="415"/>
    </location>
</feature>
<feature type="region of interest" description="G4" evidence="1">
    <location>
        <begin position="466"/>
        <end position="469"/>
    </location>
</feature>
<feature type="region of interest" description="G5" evidence="1">
    <location>
        <begin position="502"/>
        <end position="504"/>
    </location>
</feature>
<feature type="compositionally biased region" description="Polar residues" evidence="3">
    <location>
        <begin position="22"/>
        <end position="38"/>
    </location>
</feature>
<feature type="compositionally biased region" description="Pro residues" evidence="3">
    <location>
        <begin position="83"/>
        <end position="93"/>
    </location>
</feature>
<feature type="compositionally biased region" description="Basic and acidic residues" evidence="3">
    <location>
        <begin position="100"/>
        <end position="150"/>
    </location>
</feature>
<feature type="compositionally biased region" description="Low complexity" evidence="3">
    <location>
        <begin position="156"/>
        <end position="196"/>
    </location>
</feature>
<feature type="compositionally biased region" description="Pro residues" evidence="3">
    <location>
        <begin position="197"/>
        <end position="209"/>
    </location>
</feature>
<feature type="compositionally biased region" description="Basic and acidic residues" evidence="3">
    <location>
        <begin position="210"/>
        <end position="229"/>
    </location>
</feature>
<feature type="binding site" evidence="2">
    <location>
        <begin position="365"/>
        <end position="372"/>
    </location>
    <ligand>
        <name>GTP</name>
        <dbReference type="ChEBI" id="CHEBI:37565"/>
    </ligand>
</feature>
<feature type="binding site" evidence="2">
    <location>
        <begin position="412"/>
        <end position="416"/>
    </location>
    <ligand>
        <name>GTP</name>
        <dbReference type="ChEBI" id="CHEBI:37565"/>
    </ligand>
</feature>
<feature type="binding site" evidence="2">
    <location>
        <begin position="466"/>
        <end position="469"/>
    </location>
    <ligand>
        <name>GTP</name>
        <dbReference type="ChEBI" id="CHEBI:37565"/>
    </ligand>
</feature>
<sequence length="856" mass="91944">MSDNDKPKLGMRAPLGLKRTVETGQVKQSFSHGRSNTVVVEVKRRRIVPGRPGEAEPQVTEETAAAPVAPAPAPAPAAQAPVAPRPAPAPIPTGRPMTPLERREQQERLLREAEEARMAALEETRRREERAKAEATEEERRRAEENRRAEEEAERAAAAAAAAATAEAETAAAAPREEAPAAAGTAEEAPRTSSSTMPPPRRFTPVPSPKRPEPPRPQQRDRKGDDRRQSGKLTVTRALDDDSGARARSLAALKRAREKDKRAHQAGTVQQKQVRDVAVPETITVGELANRMAERGADLVKALFKMGMPVTVNQSIDQDTAELLVTEFGHNIKRVSDSDVDLITSDDVDAAETLQPRPPVVTIMGHVDHGKTSLLDALRGTDVASGEAGGITQHIGAYQVQVKSGAKITFLDTPGHEAFSEMRARGANITDIVVIVVAGDDGLRPQTIEAISHTRAAGVPMIIAINKMDKPGSNAQRVREALLQHDVQVESMGGDVQEVEVSALKKTGLDELIEKIELQAELLELKANPDRPAEGTVVEATLDKGRGAVATILVGRGTLKVGDIFVVGAESGKVRALIDDKGRNIKEAGPSLPVEILGLSGVPSAGDQLSVVENEARAREVAAYRAGVIHQKRTTAAPASLESMFSALREQKAQQYPVVVKADAQGSVEAIVGSLNKISTDLIQVRILHAGVGGITESDVSLAAASKAPIIGFNVRANAKAREIATRDGVALKYYDVIYDLLDEIRAAMAGQLGPEYLEHVVGRAEIREVFSAGKHGKAAGLLVLEGYIRQKLRARIMRDDVIIYNGSISSLRRFKDDVPEVRAGLECGITLEATTDIKPGDIVETFEVEERERTL</sequence>
<dbReference type="EMBL" id="CP000699">
    <property type="protein sequence ID" value="ABQ70161.1"/>
    <property type="molecule type" value="Genomic_DNA"/>
</dbReference>
<dbReference type="SMR" id="A5VCZ5"/>
<dbReference type="STRING" id="392499.Swit_3816"/>
<dbReference type="PaxDb" id="392499-Swit_3816"/>
<dbReference type="KEGG" id="swi:Swit_3816"/>
<dbReference type="eggNOG" id="COG0532">
    <property type="taxonomic scope" value="Bacteria"/>
</dbReference>
<dbReference type="HOGENOM" id="CLU_006301_10_1_5"/>
<dbReference type="OrthoDB" id="9811804at2"/>
<dbReference type="Proteomes" id="UP000001989">
    <property type="component" value="Chromosome"/>
</dbReference>
<dbReference type="GO" id="GO:0005829">
    <property type="term" value="C:cytosol"/>
    <property type="evidence" value="ECO:0007669"/>
    <property type="project" value="TreeGrafter"/>
</dbReference>
<dbReference type="GO" id="GO:0005525">
    <property type="term" value="F:GTP binding"/>
    <property type="evidence" value="ECO:0007669"/>
    <property type="project" value="UniProtKB-KW"/>
</dbReference>
<dbReference type="GO" id="GO:0003924">
    <property type="term" value="F:GTPase activity"/>
    <property type="evidence" value="ECO:0007669"/>
    <property type="project" value="UniProtKB-UniRule"/>
</dbReference>
<dbReference type="GO" id="GO:0003743">
    <property type="term" value="F:translation initiation factor activity"/>
    <property type="evidence" value="ECO:0007669"/>
    <property type="project" value="UniProtKB-UniRule"/>
</dbReference>
<dbReference type="CDD" id="cd01887">
    <property type="entry name" value="IF2_eIF5B"/>
    <property type="match status" value="1"/>
</dbReference>
<dbReference type="CDD" id="cd03702">
    <property type="entry name" value="IF2_mtIF2_II"/>
    <property type="match status" value="1"/>
</dbReference>
<dbReference type="CDD" id="cd03692">
    <property type="entry name" value="mtIF2_IVc"/>
    <property type="match status" value="1"/>
</dbReference>
<dbReference type="FunFam" id="2.40.30.10:FF:000007">
    <property type="entry name" value="Translation initiation factor IF-2"/>
    <property type="match status" value="1"/>
</dbReference>
<dbReference type="FunFam" id="2.40.30.10:FF:000008">
    <property type="entry name" value="Translation initiation factor IF-2"/>
    <property type="match status" value="1"/>
</dbReference>
<dbReference type="FunFam" id="3.40.50.10050:FF:000001">
    <property type="entry name" value="Translation initiation factor IF-2"/>
    <property type="match status" value="1"/>
</dbReference>
<dbReference type="FunFam" id="3.40.50.300:FF:000019">
    <property type="entry name" value="Translation initiation factor IF-2"/>
    <property type="match status" value="1"/>
</dbReference>
<dbReference type="Gene3D" id="3.40.50.300">
    <property type="entry name" value="P-loop containing nucleotide triphosphate hydrolases"/>
    <property type="match status" value="1"/>
</dbReference>
<dbReference type="Gene3D" id="2.40.30.10">
    <property type="entry name" value="Translation factors"/>
    <property type="match status" value="2"/>
</dbReference>
<dbReference type="Gene3D" id="3.40.50.10050">
    <property type="entry name" value="Translation initiation factor IF- 2, domain 3"/>
    <property type="match status" value="1"/>
</dbReference>
<dbReference type="HAMAP" id="MF_00100_B">
    <property type="entry name" value="IF_2_B"/>
    <property type="match status" value="1"/>
</dbReference>
<dbReference type="InterPro" id="IPR053905">
    <property type="entry name" value="EF-G-like_DII"/>
</dbReference>
<dbReference type="InterPro" id="IPR013575">
    <property type="entry name" value="IF2_assoc_dom_bac"/>
</dbReference>
<dbReference type="InterPro" id="IPR044145">
    <property type="entry name" value="IF2_II"/>
</dbReference>
<dbReference type="InterPro" id="IPR006847">
    <property type="entry name" value="IF2_N"/>
</dbReference>
<dbReference type="InterPro" id="IPR027417">
    <property type="entry name" value="P-loop_NTPase"/>
</dbReference>
<dbReference type="InterPro" id="IPR005225">
    <property type="entry name" value="Small_GTP-bd"/>
</dbReference>
<dbReference type="InterPro" id="IPR000795">
    <property type="entry name" value="T_Tr_GTP-bd_dom"/>
</dbReference>
<dbReference type="InterPro" id="IPR000178">
    <property type="entry name" value="TF_IF2_bacterial-like"/>
</dbReference>
<dbReference type="InterPro" id="IPR015760">
    <property type="entry name" value="TIF_IF2"/>
</dbReference>
<dbReference type="InterPro" id="IPR023115">
    <property type="entry name" value="TIF_IF2_dom3"/>
</dbReference>
<dbReference type="InterPro" id="IPR036925">
    <property type="entry name" value="TIF_IF2_dom3_sf"/>
</dbReference>
<dbReference type="InterPro" id="IPR009000">
    <property type="entry name" value="Transl_B-barrel_sf"/>
</dbReference>
<dbReference type="NCBIfam" id="TIGR00487">
    <property type="entry name" value="IF-2"/>
    <property type="match status" value="1"/>
</dbReference>
<dbReference type="NCBIfam" id="TIGR00231">
    <property type="entry name" value="small_GTP"/>
    <property type="match status" value="1"/>
</dbReference>
<dbReference type="PANTHER" id="PTHR43381:SF5">
    <property type="entry name" value="TR-TYPE G DOMAIN-CONTAINING PROTEIN"/>
    <property type="match status" value="1"/>
</dbReference>
<dbReference type="PANTHER" id="PTHR43381">
    <property type="entry name" value="TRANSLATION INITIATION FACTOR IF-2-RELATED"/>
    <property type="match status" value="1"/>
</dbReference>
<dbReference type="Pfam" id="PF22042">
    <property type="entry name" value="EF-G_D2"/>
    <property type="match status" value="1"/>
</dbReference>
<dbReference type="Pfam" id="PF00009">
    <property type="entry name" value="GTP_EFTU"/>
    <property type="match status" value="1"/>
</dbReference>
<dbReference type="Pfam" id="PF11987">
    <property type="entry name" value="IF-2"/>
    <property type="match status" value="1"/>
</dbReference>
<dbReference type="Pfam" id="PF08364">
    <property type="entry name" value="IF2_assoc"/>
    <property type="match status" value="1"/>
</dbReference>
<dbReference type="Pfam" id="PF04760">
    <property type="entry name" value="IF2_N"/>
    <property type="match status" value="1"/>
</dbReference>
<dbReference type="SUPFAM" id="SSF52156">
    <property type="entry name" value="Initiation factor IF2/eIF5b, domain 3"/>
    <property type="match status" value="1"/>
</dbReference>
<dbReference type="SUPFAM" id="SSF52540">
    <property type="entry name" value="P-loop containing nucleoside triphosphate hydrolases"/>
    <property type="match status" value="1"/>
</dbReference>
<dbReference type="SUPFAM" id="SSF50447">
    <property type="entry name" value="Translation proteins"/>
    <property type="match status" value="2"/>
</dbReference>
<dbReference type="PROSITE" id="PS51722">
    <property type="entry name" value="G_TR_2"/>
    <property type="match status" value="1"/>
</dbReference>
<dbReference type="PROSITE" id="PS01176">
    <property type="entry name" value="IF2"/>
    <property type="match status" value="1"/>
</dbReference>
<evidence type="ECO:0000250" key="1"/>
<evidence type="ECO:0000255" key="2">
    <source>
        <dbReference type="HAMAP-Rule" id="MF_00100"/>
    </source>
</evidence>
<evidence type="ECO:0000256" key="3">
    <source>
        <dbReference type="SAM" id="MobiDB-lite"/>
    </source>
</evidence>
<proteinExistence type="inferred from homology"/>
<gene>
    <name evidence="2" type="primary">infB</name>
    <name type="ordered locus">Swit_3816</name>
</gene>